<comment type="function">
    <text>Involved in oxygen transport from the lung to the various peripheral tissues.</text>
</comment>
<comment type="function">
    <molecule>Hemopressin</molecule>
    <text evidence="2">Hemopressin acts as an antagonist peptide of the cannabinoid receptor CNR1. Hemopressin-binding efficiently blocks cannabinoid receptor CNR1 and subsequent signaling.</text>
</comment>
<comment type="subunit">
    <text>Heterotetramer of two alpha chains and two beta chains.</text>
</comment>
<comment type="tissue specificity">
    <text>Red blood cells.</text>
</comment>
<comment type="similarity">
    <text evidence="4">Belongs to the globin family.</text>
</comment>
<gene>
    <name type="primary">HBA</name>
</gene>
<feature type="chain" id="PRO_0000052723" description="Hemoglobin subunit alpha">
    <location>
        <begin position="1"/>
        <end position="142"/>
    </location>
</feature>
<feature type="peptide" id="PRO_0000455922" description="Hemopressin" evidence="2">
    <location>
        <begin position="96"/>
        <end position="104"/>
    </location>
</feature>
<feature type="domain" description="Globin" evidence="4">
    <location>
        <begin position="2"/>
        <end position="142"/>
    </location>
</feature>
<feature type="binding site" evidence="4">
    <location>
        <position position="59"/>
    </location>
    <ligand>
        <name>O2</name>
        <dbReference type="ChEBI" id="CHEBI:15379"/>
    </ligand>
</feature>
<feature type="binding site" description="proximal binding residue" evidence="4">
    <location>
        <position position="88"/>
    </location>
    <ligand>
        <name>heme b</name>
        <dbReference type="ChEBI" id="CHEBI:60344"/>
    </ligand>
    <ligandPart>
        <name>Fe</name>
        <dbReference type="ChEBI" id="CHEBI:18248"/>
    </ligandPart>
</feature>
<feature type="modified residue" description="Phosphoserine" evidence="3">
    <location>
        <position position="4"/>
    </location>
</feature>
<feature type="modified residue" description="N6-succinyllysine" evidence="1">
    <location>
        <position position="8"/>
    </location>
</feature>
<feature type="modified residue" description="N6-succinyllysine" evidence="1">
    <location>
        <position position="12"/>
    </location>
</feature>
<feature type="modified residue" description="N6-acetyllysine; alternate" evidence="3">
    <location>
        <position position="17"/>
    </location>
</feature>
<feature type="modified residue" description="N6-succinyllysine; alternate" evidence="1">
    <location>
        <position position="17"/>
    </location>
</feature>
<feature type="modified residue" description="Phosphotyrosine" evidence="3">
    <location>
        <position position="25"/>
    </location>
</feature>
<feature type="modified residue" description="Phosphoserine" evidence="3">
    <location>
        <position position="36"/>
    </location>
</feature>
<feature type="modified residue" description="N6-succinyllysine" evidence="1">
    <location>
        <position position="41"/>
    </location>
</feature>
<feature type="modified residue" description="Phosphoserine" evidence="3">
    <location>
        <position position="50"/>
    </location>
</feature>
<feature type="modified residue" description="Phosphoserine" evidence="1">
    <location>
        <position position="103"/>
    </location>
</feature>
<feature type="modified residue" description="Phosphothreonine" evidence="1">
    <location>
        <position position="109"/>
    </location>
</feature>
<feature type="modified residue" description="Phosphoserine" evidence="1">
    <location>
        <position position="125"/>
    </location>
</feature>
<feature type="modified residue" description="Phosphoserine" evidence="1">
    <location>
        <position position="132"/>
    </location>
</feature>
<feature type="modified residue" description="Phosphothreonine" evidence="1">
    <location>
        <position position="135"/>
    </location>
</feature>
<feature type="modified residue" description="Phosphothreonine" evidence="1">
    <location>
        <position position="138"/>
    </location>
</feature>
<feature type="modified residue" description="Phosphoserine" evidence="1">
    <location>
        <position position="139"/>
    </location>
</feature>
<reference key="1">
    <citation type="journal article" date="1987" name="Nature">
        <title>Evidence that the recently discovered theta 1-globin gene is functional in higher primates.</title>
        <authorList>
            <person name="Shaw J.-P."/>
            <person name="Marks J."/>
            <person name="Shen C.-K.J."/>
        </authorList>
    </citation>
    <scope>NUCLEOTIDE SEQUENCE [GENOMIC DNA]</scope>
</reference>
<protein>
    <recommendedName>
        <fullName>Hemoglobin subunit alpha</fullName>
    </recommendedName>
    <alternativeName>
        <fullName>Alpha-globin</fullName>
    </alternativeName>
    <alternativeName>
        <fullName>Hemoglobin alpha chain</fullName>
    </alternativeName>
    <component>
        <recommendedName>
            <fullName evidence="2">Hemopressin</fullName>
        </recommendedName>
    </component>
</protein>
<accession>P63111</accession>
<accession>P01931</accession>
<proteinExistence type="evidence at transcript level"/>
<organism>
    <name type="scientific">Papio anubis</name>
    <name type="common">Olive baboon</name>
    <dbReference type="NCBI Taxonomy" id="9555"/>
    <lineage>
        <taxon>Eukaryota</taxon>
        <taxon>Metazoa</taxon>
        <taxon>Chordata</taxon>
        <taxon>Craniata</taxon>
        <taxon>Vertebrata</taxon>
        <taxon>Euteleostomi</taxon>
        <taxon>Mammalia</taxon>
        <taxon>Eutheria</taxon>
        <taxon>Euarchontoglires</taxon>
        <taxon>Primates</taxon>
        <taxon>Haplorrhini</taxon>
        <taxon>Catarrhini</taxon>
        <taxon>Cercopithecidae</taxon>
        <taxon>Cercopithecinae</taxon>
        <taxon>Papio</taxon>
    </lineage>
</organism>
<evidence type="ECO:0000250" key="1">
    <source>
        <dbReference type="UniProtKB" id="P01942"/>
    </source>
</evidence>
<evidence type="ECO:0000250" key="2">
    <source>
        <dbReference type="UniProtKB" id="P01946"/>
    </source>
</evidence>
<evidence type="ECO:0000250" key="3">
    <source>
        <dbReference type="UniProtKB" id="P69905"/>
    </source>
</evidence>
<evidence type="ECO:0000255" key="4">
    <source>
        <dbReference type="PROSITE-ProRule" id="PRU00238"/>
    </source>
</evidence>
<dbReference type="EMBL" id="X05289">
    <property type="protein sequence ID" value="CAA28907.1"/>
    <property type="molecule type" value="Genomic_DNA"/>
</dbReference>
<dbReference type="PIR" id="C27792">
    <property type="entry name" value="C27792"/>
</dbReference>
<dbReference type="RefSeq" id="NP_001162287.1">
    <property type="nucleotide sequence ID" value="NM_001168816.1"/>
</dbReference>
<dbReference type="RefSeq" id="XP_003916331.1">
    <property type="nucleotide sequence ID" value="XM_003916282.2"/>
</dbReference>
<dbReference type="SMR" id="P63111"/>
<dbReference type="STRING" id="9555.ENSPANP00000022220"/>
<dbReference type="GeneID" id="100137279"/>
<dbReference type="CTD" id="3039"/>
<dbReference type="eggNOG" id="KOG3378">
    <property type="taxonomic scope" value="Eukaryota"/>
</dbReference>
<dbReference type="HOGENOM" id="CLU_003827_10_2_1"/>
<dbReference type="Proteomes" id="UP000028761">
    <property type="component" value="Chromosome 20"/>
</dbReference>
<dbReference type="Bgee" id="ENSPANG00000033097">
    <property type="expression patterns" value="Expressed in bone marrow and 64 other cell types or tissues"/>
</dbReference>
<dbReference type="GO" id="GO:0072562">
    <property type="term" value="C:blood microparticle"/>
    <property type="evidence" value="ECO:0007669"/>
    <property type="project" value="TreeGrafter"/>
</dbReference>
<dbReference type="GO" id="GO:0031838">
    <property type="term" value="C:haptoglobin-hemoglobin complex"/>
    <property type="evidence" value="ECO:0007669"/>
    <property type="project" value="TreeGrafter"/>
</dbReference>
<dbReference type="GO" id="GO:0005833">
    <property type="term" value="C:hemoglobin complex"/>
    <property type="evidence" value="ECO:0007669"/>
    <property type="project" value="InterPro"/>
</dbReference>
<dbReference type="GO" id="GO:0031720">
    <property type="term" value="F:haptoglobin binding"/>
    <property type="evidence" value="ECO:0007669"/>
    <property type="project" value="TreeGrafter"/>
</dbReference>
<dbReference type="GO" id="GO:0020037">
    <property type="term" value="F:heme binding"/>
    <property type="evidence" value="ECO:0007669"/>
    <property type="project" value="InterPro"/>
</dbReference>
<dbReference type="GO" id="GO:0005506">
    <property type="term" value="F:iron ion binding"/>
    <property type="evidence" value="ECO:0007669"/>
    <property type="project" value="InterPro"/>
</dbReference>
<dbReference type="GO" id="GO:0043177">
    <property type="term" value="F:organic acid binding"/>
    <property type="evidence" value="ECO:0007669"/>
    <property type="project" value="TreeGrafter"/>
</dbReference>
<dbReference type="GO" id="GO:0019825">
    <property type="term" value="F:oxygen binding"/>
    <property type="evidence" value="ECO:0007669"/>
    <property type="project" value="InterPro"/>
</dbReference>
<dbReference type="GO" id="GO:0005344">
    <property type="term" value="F:oxygen carrier activity"/>
    <property type="evidence" value="ECO:0007669"/>
    <property type="project" value="UniProtKB-KW"/>
</dbReference>
<dbReference type="GO" id="GO:0004601">
    <property type="term" value="F:peroxidase activity"/>
    <property type="evidence" value="ECO:0007669"/>
    <property type="project" value="TreeGrafter"/>
</dbReference>
<dbReference type="GO" id="GO:0042744">
    <property type="term" value="P:hydrogen peroxide catabolic process"/>
    <property type="evidence" value="ECO:0007669"/>
    <property type="project" value="TreeGrafter"/>
</dbReference>
<dbReference type="CDD" id="cd08927">
    <property type="entry name" value="Hb-alpha-like"/>
    <property type="match status" value="1"/>
</dbReference>
<dbReference type="FunFam" id="1.10.490.10:FF:000002">
    <property type="entry name" value="Hemoglobin subunit alpha"/>
    <property type="match status" value="1"/>
</dbReference>
<dbReference type="Gene3D" id="1.10.490.10">
    <property type="entry name" value="Globins"/>
    <property type="match status" value="1"/>
</dbReference>
<dbReference type="InterPro" id="IPR000971">
    <property type="entry name" value="Globin"/>
</dbReference>
<dbReference type="InterPro" id="IPR009050">
    <property type="entry name" value="Globin-like_sf"/>
</dbReference>
<dbReference type="InterPro" id="IPR012292">
    <property type="entry name" value="Globin/Proto"/>
</dbReference>
<dbReference type="InterPro" id="IPR002338">
    <property type="entry name" value="Hemoglobin_a-typ"/>
</dbReference>
<dbReference type="InterPro" id="IPR050056">
    <property type="entry name" value="Hemoglobin_oxygen_transport"/>
</dbReference>
<dbReference type="InterPro" id="IPR002339">
    <property type="entry name" value="Hemoglobin_pi"/>
</dbReference>
<dbReference type="PANTHER" id="PTHR11442">
    <property type="entry name" value="HEMOGLOBIN FAMILY MEMBER"/>
    <property type="match status" value="1"/>
</dbReference>
<dbReference type="PANTHER" id="PTHR11442:SF48">
    <property type="entry name" value="HEMOGLOBIN SUBUNIT ALPHA"/>
    <property type="match status" value="1"/>
</dbReference>
<dbReference type="Pfam" id="PF00042">
    <property type="entry name" value="Globin"/>
    <property type="match status" value="1"/>
</dbReference>
<dbReference type="PRINTS" id="PR00612">
    <property type="entry name" value="ALPHAHAEM"/>
</dbReference>
<dbReference type="PRINTS" id="PR00815">
    <property type="entry name" value="PIHAEM"/>
</dbReference>
<dbReference type="SUPFAM" id="SSF46458">
    <property type="entry name" value="Globin-like"/>
    <property type="match status" value="1"/>
</dbReference>
<dbReference type="PROSITE" id="PS01033">
    <property type="entry name" value="GLOBIN"/>
    <property type="match status" value="1"/>
</dbReference>
<keyword id="KW-0007">Acetylation</keyword>
<keyword id="KW-0349">Heme</keyword>
<keyword id="KW-0408">Iron</keyword>
<keyword id="KW-0479">Metal-binding</keyword>
<keyword id="KW-0561">Oxygen transport</keyword>
<keyword id="KW-0597">Phosphoprotein</keyword>
<keyword id="KW-1185">Reference proteome</keyword>
<keyword id="KW-0813">Transport</keyword>
<name>HBA_PAPAN</name>
<sequence>MVLSPDDKKHVKAAWGKVGEHAGEYGAEALERMFLSFPTTKTYFPHFDLSHGSDQVNKHGKKVADALTLAVGHVDDMPQALSKLSDLHAHKLRVDPVNFKLLSHCLLVTLAAHLPAEFTPAVHASLDKFLASVSTVLTSKYR</sequence>